<keyword id="KW-0067">ATP-binding</keyword>
<keyword id="KW-0315">Glutamine amidotransferase</keyword>
<keyword id="KW-0436">Ligase</keyword>
<keyword id="KW-0460">Magnesium</keyword>
<keyword id="KW-0479">Metal-binding</keyword>
<keyword id="KW-0547">Nucleotide-binding</keyword>
<keyword id="KW-0665">Pyrimidine biosynthesis</keyword>
<protein>
    <recommendedName>
        <fullName evidence="1">CTP synthase</fullName>
        <ecNumber evidence="1">6.3.4.2</ecNumber>
    </recommendedName>
    <alternativeName>
        <fullName evidence="1">Cytidine 5'-triphosphate synthase</fullName>
    </alternativeName>
    <alternativeName>
        <fullName evidence="1">Cytidine triphosphate synthetase</fullName>
        <shortName evidence="1">CTP synthetase</shortName>
        <shortName evidence="1">CTPS</shortName>
    </alternativeName>
    <alternativeName>
        <fullName evidence="1">UTP--ammonia ligase</fullName>
    </alternativeName>
</protein>
<proteinExistence type="inferred from homology"/>
<comment type="function">
    <text evidence="1">Catalyzes the ATP-dependent amination of UTP to CTP with either L-glutamine or ammonia as the source of nitrogen. Regulates intracellular CTP levels through interactions with the four ribonucleotide triphosphates.</text>
</comment>
<comment type="catalytic activity">
    <reaction evidence="1">
        <text>UTP + L-glutamine + ATP + H2O = CTP + L-glutamate + ADP + phosphate + 2 H(+)</text>
        <dbReference type="Rhea" id="RHEA:26426"/>
        <dbReference type="ChEBI" id="CHEBI:15377"/>
        <dbReference type="ChEBI" id="CHEBI:15378"/>
        <dbReference type="ChEBI" id="CHEBI:29985"/>
        <dbReference type="ChEBI" id="CHEBI:30616"/>
        <dbReference type="ChEBI" id="CHEBI:37563"/>
        <dbReference type="ChEBI" id="CHEBI:43474"/>
        <dbReference type="ChEBI" id="CHEBI:46398"/>
        <dbReference type="ChEBI" id="CHEBI:58359"/>
        <dbReference type="ChEBI" id="CHEBI:456216"/>
        <dbReference type="EC" id="6.3.4.2"/>
    </reaction>
</comment>
<comment type="catalytic activity">
    <reaction evidence="1">
        <text>L-glutamine + H2O = L-glutamate + NH4(+)</text>
        <dbReference type="Rhea" id="RHEA:15889"/>
        <dbReference type="ChEBI" id="CHEBI:15377"/>
        <dbReference type="ChEBI" id="CHEBI:28938"/>
        <dbReference type="ChEBI" id="CHEBI:29985"/>
        <dbReference type="ChEBI" id="CHEBI:58359"/>
    </reaction>
</comment>
<comment type="catalytic activity">
    <reaction evidence="1">
        <text>UTP + NH4(+) + ATP = CTP + ADP + phosphate + 2 H(+)</text>
        <dbReference type="Rhea" id="RHEA:16597"/>
        <dbReference type="ChEBI" id="CHEBI:15378"/>
        <dbReference type="ChEBI" id="CHEBI:28938"/>
        <dbReference type="ChEBI" id="CHEBI:30616"/>
        <dbReference type="ChEBI" id="CHEBI:37563"/>
        <dbReference type="ChEBI" id="CHEBI:43474"/>
        <dbReference type="ChEBI" id="CHEBI:46398"/>
        <dbReference type="ChEBI" id="CHEBI:456216"/>
    </reaction>
</comment>
<comment type="activity regulation">
    <text evidence="1">Allosterically activated by GTP, when glutamine is the substrate; GTP has no effect on the reaction when ammonia is the substrate. The allosteric effector GTP functions by stabilizing the protein conformation that binds the tetrahedral intermediate(s) formed during glutamine hydrolysis. Inhibited by the product CTP, via allosteric rather than competitive inhibition.</text>
</comment>
<comment type="pathway">
    <text evidence="1">Pyrimidine metabolism; CTP biosynthesis via de novo pathway; CTP from UDP: step 2/2.</text>
</comment>
<comment type="subunit">
    <text evidence="1">Homotetramer.</text>
</comment>
<comment type="miscellaneous">
    <text evidence="1">CTPSs have evolved a hybrid strategy for distinguishing between UTP and CTP. The overlapping regions of the product feedback inhibitory and substrate sites recognize a common feature in both compounds, the triphosphate moiety. To differentiate isosteric substrate and product pyrimidine rings, an additional pocket far from the expected kinase/ligase catalytic site, specifically recognizes the cytosine and ribose portions of the product inhibitor.</text>
</comment>
<comment type="similarity">
    <text evidence="1">Belongs to the CTP synthase family.</text>
</comment>
<name>PYRG_PROMS</name>
<dbReference type="EC" id="6.3.4.2" evidence="1"/>
<dbReference type="EMBL" id="CP000551">
    <property type="protein sequence ID" value="ABM71182.1"/>
    <property type="molecule type" value="Genomic_DNA"/>
</dbReference>
<dbReference type="RefSeq" id="WP_011819300.1">
    <property type="nucleotide sequence ID" value="NC_008816.1"/>
</dbReference>
<dbReference type="SMR" id="A2BTS1"/>
<dbReference type="STRING" id="146891.A9601_18991"/>
<dbReference type="KEGG" id="pmb:A9601_18991"/>
<dbReference type="eggNOG" id="COG0504">
    <property type="taxonomic scope" value="Bacteria"/>
</dbReference>
<dbReference type="HOGENOM" id="CLU_011675_5_0_3"/>
<dbReference type="OrthoDB" id="9801107at2"/>
<dbReference type="UniPathway" id="UPA00159">
    <property type="reaction ID" value="UER00277"/>
</dbReference>
<dbReference type="Proteomes" id="UP000002590">
    <property type="component" value="Chromosome"/>
</dbReference>
<dbReference type="GO" id="GO:0005829">
    <property type="term" value="C:cytosol"/>
    <property type="evidence" value="ECO:0007669"/>
    <property type="project" value="TreeGrafter"/>
</dbReference>
<dbReference type="GO" id="GO:0005524">
    <property type="term" value="F:ATP binding"/>
    <property type="evidence" value="ECO:0007669"/>
    <property type="project" value="UniProtKB-KW"/>
</dbReference>
<dbReference type="GO" id="GO:0003883">
    <property type="term" value="F:CTP synthase activity"/>
    <property type="evidence" value="ECO:0007669"/>
    <property type="project" value="UniProtKB-UniRule"/>
</dbReference>
<dbReference type="GO" id="GO:0004359">
    <property type="term" value="F:glutaminase activity"/>
    <property type="evidence" value="ECO:0007669"/>
    <property type="project" value="RHEA"/>
</dbReference>
<dbReference type="GO" id="GO:0042802">
    <property type="term" value="F:identical protein binding"/>
    <property type="evidence" value="ECO:0007669"/>
    <property type="project" value="TreeGrafter"/>
</dbReference>
<dbReference type="GO" id="GO:0046872">
    <property type="term" value="F:metal ion binding"/>
    <property type="evidence" value="ECO:0007669"/>
    <property type="project" value="UniProtKB-KW"/>
</dbReference>
<dbReference type="GO" id="GO:0044210">
    <property type="term" value="P:'de novo' CTP biosynthetic process"/>
    <property type="evidence" value="ECO:0007669"/>
    <property type="project" value="UniProtKB-UniRule"/>
</dbReference>
<dbReference type="GO" id="GO:0019856">
    <property type="term" value="P:pyrimidine nucleobase biosynthetic process"/>
    <property type="evidence" value="ECO:0007669"/>
    <property type="project" value="TreeGrafter"/>
</dbReference>
<dbReference type="CDD" id="cd03113">
    <property type="entry name" value="CTPS_N"/>
    <property type="match status" value="1"/>
</dbReference>
<dbReference type="CDD" id="cd01746">
    <property type="entry name" value="GATase1_CTP_Synthase"/>
    <property type="match status" value="1"/>
</dbReference>
<dbReference type="FunFam" id="3.40.50.300:FF:000009">
    <property type="entry name" value="CTP synthase"/>
    <property type="match status" value="1"/>
</dbReference>
<dbReference type="FunFam" id="3.40.50.880:FF:000002">
    <property type="entry name" value="CTP synthase"/>
    <property type="match status" value="1"/>
</dbReference>
<dbReference type="Gene3D" id="3.40.50.880">
    <property type="match status" value="1"/>
</dbReference>
<dbReference type="Gene3D" id="3.40.50.300">
    <property type="entry name" value="P-loop containing nucleotide triphosphate hydrolases"/>
    <property type="match status" value="1"/>
</dbReference>
<dbReference type="HAMAP" id="MF_01227">
    <property type="entry name" value="PyrG"/>
    <property type="match status" value="1"/>
</dbReference>
<dbReference type="InterPro" id="IPR029062">
    <property type="entry name" value="Class_I_gatase-like"/>
</dbReference>
<dbReference type="InterPro" id="IPR004468">
    <property type="entry name" value="CTP_synthase"/>
</dbReference>
<dbReference type="InterPro" id="IPR017456">
    <property type="entry name" value="CTP_synthase_N"/>
</dbReference>
<dbReference type="InterPro" id="IPR017926">
    <property type="entry name" value="GATASE"/>
</dbReference>
<dbReference type="InterPro" id="IPR033828">
    <property type="entry name" value="GATase1_CTP_Synthase"/>
</dbReference>
<dbReference type="InterPro" id="IPR027417">
    <property type="entry name" value="P-loop_NTPase"/>
</dbReference>
<dbReference type="NCBIfam" id="NF003792">
    <property type="entry name" value="PRK05380.1"/>
    <property type="match status" value="1"/>
</dbReference>
<dbReference type="NCBIfam" id="TIGR00337">
    <property type="entry name" value="PyrG"/>
    <property type="match status" value="1"/>
</dbReference>
<dbReference type="PANTHER" id="PTHR11550">
    <property type="entry name" value="CTP SYNTHASE"/>
    <property type="match status" value="1"/>
</dbReference>
<dbReference type="PANTHER" id="PTHR11550:SF0">
    <property type="entry name" value="CTP SYNTHASE-RELATED"/>
    <property type="match status" value="1"/>
</dbReference>
<dbReference type="Pfam" id="PF06418">
    <property type="entry name" value="CTP_synth_N"/>
    <property type="match status" value="1"/>
</dbReference>
<dbReference type="Pfam" id="PF00117">
    <property type="entry name" value="GATase"/>
    <property type="match status" value="1"/>
</dbReference>
<dbReference type="SUPFAM" id="SSF52317">
    <property type="entry name" value="Class I glutamine amidotransferase-like"/>
    <property type="match status" value="1"/>
</dbReference>
<dbReference type="SUPFAM" id="SSF52540">
    <property type="entry name" value="P-loop containing nucleoside triphosphate hydrolases"/>
    <property type="match status" value="1"/>
</dbReference>
<dbReference type="PROSITE" id="PS51273">
    <property type="entry name" value="GATASE_TYPE_1"/>
    <property type="match status" value="1"/>
</dbReference>
<gene>
    <name evidence="1" type="primary">pyrG</name>
    <name type="ordered locus">A9601_18991</name>
</gene>
<reference key="1">
    <citation type="journal article" date="2007" name="PLoS Genet.">
        <title>Patterns and implications of gene gain and loss in the evolution of Prochlorococcus.</title>
        <authorList>
            <person name="Kettler G.C."/>
            <person name="Martiny A.C."/>
            <person name="Huang K."/>
            <person name="Zucker J."/>
            <person name="Coleman M.L."/>
            <person name="Rodrigue S."/>
            <person name="Chen F."/>
            <person name="Lapidus A."/>
            <person name="Ferriera S."/>
            <person name="Johnson J."/>
            <person name="Steglich C."/>
            <person name="Church G.M."/>
            <person name="Richardson P."/>
            <person name="Chisholm S.W."/>
        </authorList>
    </citation>
    <scope>NUCLEOTIDE SEQUENCE [LARGE SCALE GENOMIC DNA]</scope>
    <source>
        <strain>AS9601</strain>
    </source>
</reference>
<organism>
    <name type="scientific">Prochlorococcus marinus (strain AS9601)</name>
    <dbReference type="NCBI Taxonomy" id="146891"/>
    <lineage>
        <taxon>Bacteria</taxon>
        <taxon>Bacillati</taxon>
        <taxon>Cyanobacteriota</taxon>
        <taxon>Cyanophyceae</taxon>
        <taxon>Synechococcales</taxon>
        <taxon>Prochlorococcaceae</taxon>
        <taxon>Prochlorococcus</taxon>
    </lineage>
</organism>
<feature type="chain" id="PRO_1000139528" description="CTP synthase">
    <location>
        <begin position="1"/>
        <end position="536"/>
    </location>
</feature>
<feature type="domain" description="Glutamine amidotransferase type-1" evidence="1">
    <location>
        <begin position="292"/>
        <end position="534"/>
    </location>
</feature>
<feature type="region of interest" description="Amidoligase domain" evidence="1">
    <location>
        <begin position="1"/>
        <end position="267"/>
    </location>
</feature>
<feature type="active site" description="Nucleophile; for glutamine hydrolysis" evidence="1">
    <location>
        <position position="381"/>
    </location>
</feature>
<feature type="active site" evidence="1">
    <location>
        <position position="507"/>
    </location>
</feature>
<feature type="active site" evidence="1">
    <location>
        <position position="509"/>
    </location>
</feature>
<feature type="binding site" evidence="1">
    <location>
        <position position="13"/>
    </location>
    <ligand>
        <name>CTP</name>
        <dbReference type="ChEBI" id="CHEBI:37563"/>
        <note>allosteric inhibitor</note>
    </ligand>
</feature>
<feature type="binding site" evidence="1">
    <location>
        <position position="13"/>
    </location>
    <ligand>
        <name>UTP</name>
        <dbReference type="ChEBI" id="CHEBI:46398"/>
    </ligand>
</feature>
<feature type="binding site" evidence="1">
    <location>
        <begin position="14"/>
        <end position="19"/>
    </location>
    <ligand>
        <name>ATP</name>
        <dbReference type="ChEBI" id="CHEBI:30616"/>
    </ligand>
</feature>
<feature type="binding site" evidence="1">
    <location>
        <position position="71"/>
    </location>
    <ligand>
        <name>ATP</name>
        <dbReference type="ChEBI" id="CHEBI:30616"/>
    </ligand>
</feature>
<feature type="binding site" evidence="1">
    <location>
        <position position="71"/>
    </location>
    <ligand>
        <name>Mg(2+)</name>
        <dbReference type="ChEBI" id="CHEBI:18420"/>
    </ligand>
</feature>
<feature type="binding site" evidence="1">
    <location>
        <position position="141"/>
    </location>
    <ligand>
        <name>Mg(2+)</name>
        <dbReference type="ChEBI" id="CHEBI:18420"/>
    </ligand>
</feature>
<feature type="binding site" evidence="1">
    <location>
        <begin position="148"/>
        <end position="150"/>
    </location>
    <ligand>
        <name>CTP</name>
        <dbReference type="ChEBI" id="CHEBI:37563"/>
        <note>allosteric inhibitor</note>
    </ligand>
</feature>
<feature type="binding site" evidence="1">
    <location>
        <begin position="188"/>
        <end position="193"/>
    </location>
    <ligand>
        <name>CTP</name>
        <dbReference type="ChEBI" id="CHEBI:37563"/>
        <note>allosteric inhibitor</note>
    </ligand>
</feature>
<feature type="binding site" evidence="1">
    <location>
        <begin position="188"/>
        <end position="193"/>
    </location>
    <ligand>
        <name>UTP</name>
        <dbReference type="ChEBI" id="CHEBI:46398"/>
    </ligand>
</feature>
<feature type="binding site" evidence="1">
    <location>
        <position position="224"/>
    </location>
    <ligand>
        <name>CTP</name>
        <dbReference type="ChEBI" id="CHEBI:37563"/>
        <note>allosteric inhibitor</note>
    </ligand>
</feature>
<feature type="binding site" evidence="1">
    <location>
        <position position="224"/>
    </location>
    <ligand>
        <name>UTP</name>
        <dbReference type="ChEBI" id="CHEBI:46398"/>
    </ligand>
</feature>
<feature type="binding site" evidence="1">
    <location>
        <position position="354"/>
    </location>
    <ligand>
        <name>L-glutamine</name>
        <dbReference type="ChEBI" id="CHEBI:58359"/>
    </ligand>
</feature>
<feature type="binding site" evidence="1">
    <location>
        <begin position="382"/>
        <end position="385"/>
    </location>
    <ligand>
        <name>L-glutamine</name>
        <dbReference type="ChEBI" id="CHEBI:58359"/>
    </ligand>
</feature>
<feature type="binding site" evidence="1">
    <location>
        <position position="405"/>
    </location>
    <ligand>
        <name>L-glutamine</name>
        <dbReference type="ChEBI" id="CHEBI:58359"/>
    </ligand>
</feature>
<feature type="binding site" evidence="1">
    <location>
        <position position="462"/>
    </location>
    <ligand>
        <name>L-glutamine</name>
        <dbReference type="ChEBI" id="CHEBI:58359"/>
    </ligand>
</feature>
<sequence length="536" mass="59590">MSKFVFVTGGVVSSIGKGIVAASLGRLLKSRGYSVSILKLDPYLNVDPGTMSPFQHGEVFVTEDGAETDLDLGHYERFTDTAMTRLNSVTTGSIYQAVINKERRGNYNGGTVQVIPHITGEIRERIHRVAANSNADIIITEIGGTVGDIESLPFLEAIREFKNDVNRNDVAYIHVTLLPYIKTSGEIKTKPTQHSVKELRSIGIQPDLLVCRSDKSINEALKKKLSGFCGVNINSVIEALDADSIYSVPLSLKKEGLCKETLKYLDLEDKKCDLKNWEQLIHNLRNPGDPIKVALVGKYIELGDAYLSVVEALRHACIEQRALLDLHWVSAEMIENNSAETYLNEVDAIVVPGGFGNRGVNGKISAIKFARENKIPFLGLCLGMQCAVIEWARNVANLPDASSSELDPNTPNPVIHLLPEQEDVVDLGGTMRLGVYPCRLTKNTTGKNLYDEDVIYERHRHRYEFNNYYKQSFLDSGYKISGTSPDGRLVELIELENHPYFLACQYHPEFLSRPGKPHPLFKGLIKASQDKLTQSN</sequence>
<evidence type="ECO:0000255" key="1">
    <source>
        <dbReference type="HAMAP-Rule" id="MF_01227"/>
    </source>
</evidence>
<accession>A2BTS1</accession>